<reference key="1">
    <citation type="journal article" date="2008" name="PLoS ONE">
        <title>Genetic basis of virulence attenuation revealed by comparative genomic analysis of Mycobacterium tuberculosis strain H37Ra versus H37Rv.</title>
        <authorList>
            <person name="Zheng H."/>
            <person name="Lu L."/>
            <person name="Wang B."/>
            <person name="Pu S."/>
            <person name="Zhang X."/>
            <person name="Zhu G."/>
            <person name="Shi W."/>
            <person name="Zhang L."/>
            <person name="Wang H."/>
            <person name="Wang S."/>
            <person name="Zhao G."/>
            <person name="Zhang Y."/>
        </authorList>
    </citation>
    <scope>NUCLEOTIDE SEQUENCE [LARGE SCALE GENOMIC DNA]</scope>
    <source>
        <strain>ATCC 25177 / H37Ra</strain>
    </source>
</reference>
<organism>
    <name type="scientific">Mycobacterium tuberculosis (strain ATCC 25177 / H37Ra)</name>
    <dbReference type="NCBI Taxonomy" id="419947"/>
    <lineage>
        <taxon>Bacteria</taxon>
        <taxon>Bacillati</taxon>
        <taxon>Actinomycetota</taxon>
        <taxon>Actinomycetes</taxon>
        <taxon>Mycobacteriales</taxon>
        <taxon>Mycobacteriaceae</taxon>
        <taxon>Mycobacterium</taxon>
        <taxon>Mycobacterium tuberculosis complex</taxon>
    </lineage>
</organism>
<protein>
    <recommendedName>
        <fullName evidence="1">2'-acyl-2-O-sulfo-trehalose (hydroxy)phthioceranyltransferase PapA1</fullName>
        <ecNumber evidence="1">2.3.1.283</ecNumber>
    </recommendedName>
    <alternativeName>
        <fullName>Polyketide synthase-associated protein A1</fullName>
    </alternativeName>
    <alternativeName>
        <fullName evidence="1">SL659 acyltransferase PapA1</fullName>
    </alternativeName>
</protein>
<accession>A5U9F3</accession>
<name>PAPA1_MYCTA</name>
<gene>
    <name evidence="3" type="ordered locus">MRA_3864</name>
</gene>
<proteinExistence type="inferred from homology"/>
<keyword id="KW-0012">Acyltransferase</keyword>
<keyword id="KW-1185">Reference proteome</keyword>
<keyword id="KW-0808">Transferase</keyword>
<feature type="chain" id="PRO_0000314659" description="2'-acyl-2-O-sulfo-trehalose (hydroxy)phthioceranyltransferase PapA1">
    <location>
        <begin position="1"/>
        <end position="511"/>
    </location>
</feature>
<comment type="function">
    <text evidence="1">Catalyzes the acylation of trehalose-2-sulfate-2'-palmitate (SL659) by adding the (hydroxy)phthioceranoyl group at the 3'-position to yield the diacylated intermediate 2-palmitoyl-3-(C43)-phthioceranyl-alpha, alpha'-D-trehalose-2'-sulfate (SL1278).</text>
</comment>
<comment type="catalytic activity">
    <reaction evidence="1">
        <text>a (hydroxy)phthioceranyl-[(hydroxy)phthioceranic acid synthase] + 2'-palmitoyl/stearoyl-2-O-sulfo-alpha,alpha-trehalose = a 3'-(hydroxy)phthioceranyl-2'-palmitoyl/stearoyl-2-O-sulfo-alpha,alpha-trehalose + holo-[(hydroxy)phthioceranic acid synthase].</text>
        <dbReference type="EC" id="2.3.1.283"/>
    </reaction>
</comment>
<comment type="miscellaneous">
    <text>In strain H37Ra, the sulfolipid-1 (SL-1) is not synthesized.</text>
</comment>
<comment type="similarity">
    <text evidence="2">Belongs to the PapA acyltransferase family.</text>
</comment>
<dbReference type="EC" id="2.3.1.283" evidence="1"/>
<dbReference type="EMBL" id="CP000611">
    <property type="protein sequence ID" value="ABQ75653.1"/>
    <property type="molecule type" value="Genomic_DNA"/>
</dbReference>
<dbReference type="SMR" id="A5U9F3"/>
<dbReference type="KEGG" id="mra:MRA_3864"/>
<dbReference type="eggNOG" id="COG1020">
    <property type="taxonomic scope" value="Bacteria"/>
</dbReference>
<dbReference type="HOGENOM" id="CLU_034647_1_0_11"/>
<dbReference type="Proteomes" id="UP000001988">
    <property type="component" value="Chromosome"/>
</dbReference>
<dbReference type="GO" id="GO:0016746">
    <property type="term" value="F:acyltransferase activity"/>
    <property type="evidence" value="ECO:0007669"/>
    <property type="project" value="UniProtKB-KW"/>
</dbReference>
<dbReference type="GO" id="GO:0008610">
    <property type="term" value="P:lipid biosynthetic process"/>
    <property type="evidence" value="ECO:0007669"/>
    <property type="project" value="UniProtKB-ARBA"/>
</dbReference>
<dbReference type="FunFam" id="3.30.559.10:FF:000022">
    <property type="entry name" value="Trehalose-2-sulfate acyltransferase papA2"/>
    <property type="match status" value="1"/>
</dbReference>
<dbReference type="FunFam" id="3.30.559.30:FF:000007">
    <property type="entry name" value="Trehalose-2-sulfate acyltransferase papA2"/>
    <property type="match status" value="1"/>
</dbReference>
<dbReference type="Gene3D" id="3.30.559.10">
    <property type="entry name" value="Chloramphenicol acetyltransferase-like domain"/>
    <property type="match status" value="1"/>
</dbReference>
<dbReference type="Gene3D" id="3.30.559.30">
    <property type="entry name" value="Nonribosomal peptide synthetase, condensation domain"/>
    <property type="match status" value="1"/>
</dbReference>
<dbReference type="InterPro" id="IPR023213">
    <property type="entry name" value="CAT-like_dom_sf"/>
</dbReference>
<dbReference type="InterPro" id="IPR001242">
    <property type="entry name" value="Condensatn"/>
</dbReference>
<dbReference type="Pfam" id="PF00668">
    <property type="entry name" value="Condensation"/>
    <property type="match status" value="1"/>
</dbReference>
<dbReference type="SUPFAM" id="SSF52777">
    <property type="entry name" value="CoA-dependent acyltransferases"/>
    <property type="match status" value="2"/>
</dbReference>
<evidence type="ECO:0000250" key="1">
    <source>
        <dbReference type="UniProtKB" id="P9WIK9"/>
    </source>
</evidence>
<evidence type="ECO:0000305" key="2"/>
<evidence type="ECO:0000312" key="3">
    <source>
        <dbReference type="EMBL" id="ABQ75653.1"/>
    </source>
</evidence>
<sequence>MRIGPVELSAVKDWDPAPGVLVSWHPTPASCAKALAAPVSAVPPSYVQARQIRSFSEQAARGLDHSRLLIASVEVFGHCDLRAMTYVINAHLRRHDTYRSWFELRDTDHIVRHSIADPADIEFVPTTHGEMTSADLRQHIVATPDSLHWDCFSFGVIQRADSFTFYASIDHLHADGQFVGVGLMEFQSMYTALIMGEPPIGLSEAGSYVDFCVRQHEYTSALTVDSPEVRAWIDFAEINNGTFPEFPLPLGDPSVRCGGDLLSMMLMDEQQTQRFESACMAANARFIGGMLACIAIAIHELTGADTYFGITPKDIRTPADLMTQGWFTGQIPVTVPVAGLSFNEIARIAQTSFDTGADLAKVPFERVVELSPSLRRPQPLFSLVNFFDAQVGPLSAVTKLFEGLNVGTYSDGRVTYPLSTMVGRFDETAASVLFPDNPVARESVTAYLRAIRSVCMRIANGGTAERVGNVVALSPGRRNNIERMTWRSCRAGDFIDICNLKVANVTVDREA</sequence>